<keyword id="KW-0030">Aminoacyl-tRNA synthetase</keyword>
<keyword id="KW-0067">ATP-binding</keyword>
<keyword id="KW-0963">Cytoplasm</keyword>
<keyword id="KW-0436">Ligase</keyword>
<keyword id="KW-0479">Metal-binding</keyword>
<keyword id="KW-0547">Nucleotide-binding</keyword>
<keyword id="KW-0648">Protein biosynthesis</keyword>
<keyword id="KW-0862">Zinc</keyword>
<protein>
    <recommendedName>
        <fullName evidence="1">Isoleucine--tRNA ligase</fullName>
        <ecNumber evidence="1">6.1.1.5</ecNumber>
    </recommendedName>
    <alternativeName>
        <fullName evidence="1">Isoleucyl-tRNA synthetase</fullName>
        <shortName evidence="1">IleRS</shortName>
    </alternativeName>
</protein>
<organism>
    <name type="scientific">Rickettsia bellii (strain RML369-C)</name>
    <dbReference type="NCBI Taxonomy" id="336407"/>
    <lineage>
        <taxon>Bacteria</taxon>
        <taxon>Pseudomonadati</taxon>
        <taxon>Pseudomonadota</taxon>
        <taxon>Alphaproteobacteria</taxon>
        <taxon>Rickettsiales</taxon>
        <taxon>Rickettsiaceae</taxon>
        <taxon>Rickettsieae</taxon>
        <taxon>Rickettsia</taxon>
        <taxon>belli group</taxon>
    </lineage>
</organism>
<dbReference type="EC" id="6.1.1.5" evidence="1"/>
<dbReference type="EMBL" id="CP000087">
    <property type="protein sequence ID" value="ABE04683.1"/>
    <property type="molecule type" value="Genomic_DNA"/>
</dbReference>
<dbReference type="RefSeq" id="WP_011477271.1">
    <property type="nucleotide sequence ID" value="NC_007940.1"/>
</dbReference>
<dbReference type="SMR" id="Q1RIY1"/>
<dbReference type="KEGG" id="rbe:RBE_0602"/>
<dbReference type="eggNOG" id="COG0060">
    <property type="taxonomic scope" value="Bacteria"/>
</dbReference>
<dbReference type="HOGENOM" id="CLU_001493_1_1_5"/>
<dbReference type="OrthoDB" id="9810365at2"/>
<dbReference type="Proteomes" id="UP000001951">
    <property type="component" value="Chromosome"/>
</dbReference>
<dbReference type="GO" id="GO:0005737">
    <property type="term" value="C:cytoplasm"/>
    <property type="evidence" value="ECO:0007669"/>
    <property type="project" value="UniProtKB-SubCell"/>
</dbReference>
<dbReference type="GO" id="GO:0002161">
    <property type="term" value="F:aminoacyl-tRNA deacylase activity"/>
    <property type="evidence" value="ECO:0007669"/>
    <property type="project" value="InterPro"/>
</dbReference>
<dbReference type="GO" id="GO:0005524">
    <property type="term" value="F:ATP binding"/>
    <property type="evidence" value="ECO:0007669"/>
    <property type="project" value="UniProtKB-UniRule"/>
</dbReference>
<dbReference type="GO" id="GO:0004822">
    <property type="term" value="F:isoleucine-tRNA ligase activity"/>
    <property type="evidence" value="ECO:0007669"/>
    <property type="project" value="UniProtKB-UniRule"/>
</dbReference>
<dbReference type="GO" id="GO:0000049">
    <property type="term" value="F:tRNA binding"/>
    <property type="evidence" value="ECO:0007669"/>
    <property type="project" value="InterPro"/>
</dbReference>
<dbReference type="GO" id="GO:0008270">
    <property type="term" value="F:zinc ion binding"/>
    <property type="evidence" value="ECO:0007669"/>
    <property type="project" value="UniProtKB-UniRule"/>
</dbReference>
<dbReference type="GO" id="GO:0006428">
    <property type="term" value="P:isoleucyl-tRNA aminoacylation"/>
    <property type="evidence" value="ECO:0007669"/>
    <property type="project" value="UniProtKB-UniRule"/>
</dbReference>
<dbReference type="CDD" id="cd07961">
    <property type="entry name" value="Anticodon_Ia_Ile_ABEc"/>
    <property type="match status" value="1"/>
</dbReference>
<dbReference type="CDD" id="cd00818">
    <property type="entry name" value="IleRS_core"/>
    <property type="match status" value="1"/>
</dbReference>
<dbReference type="FunFam" id="3.40.50.620:FF:000205">
    <property type="entry name" value="Isoleucine--tRNA ligase"/>
    <property type="match status" value="1"/>
</dbReference>
<dbReference type="FunFam" id="3.40.50.620:FF:000241">
    <property type="entry name" value="Isoleucine--tRNA ligase"/>
    <property type="match status" value="1"/>
</dbReference>
<dbReference type="Gene3D" id="3.40.50.620">
    <property type="entry name" value="HUPs"/>
    <property type="match status" value="2"/>
</dbReference>
<dbReference type="Gene3D" id="1.10.730.10">
    <property type="entry name" value="Isoleucyl-tRNA Synthetase, Domain 1"/>
    <property type="match status" value="1"/>
</dbReference>
<dbReference type="HAMAP" id="MF_02003">
    <property type="entry name" value="Ile_tRNA_synth_type2"/>
    <property type="match status" value="1"/>
</dbReference>
<dbReference type="InterPro" id="IPR001412">
    <property type="entry name" value="aa-tRNA-synth_I_CS"/>
</dbReference>
<dbReference type="InterPro" id="IPR002300">
    <property type="entry name" value="aa-tRNA-synth_Ia"/>
</dbReference>
<dbReference type="InterPro" id="IPR033709">
    <property type="entry name" value="Anticodon_Ile_ABEc"/>
</dbReference>
<dbReference type="InterPro" id="IPR002301">
    <property type="entry name" value="Ile-tRNA-ligase"/>
</dbReference>
<dbReference type="InterPro" id="IPR023586">
    <property type="entry name" value="Ile-tRNA-ligase_type2"/>
</dbReference>
<dbReference type="InterPro" id="IPR013155">
    <property type="entry name" value="M/V/L/I-tRNA-synth_anticd-bd"/>
</dbReference>
<dbReference type="InterPro" id="IPR014729">
    <property type="entry name" value="Rossmann-like_a/b/a_fold"/>
</dbReference>
<dbReference type="InterPro" id="IPR022439">
    <property type="entry name" value="RPE4"/>
</dbReference>
<dbReference type="InterPro" id="IPR009080">
    <property type="entry name" value="tRNAsynth_Ia_anticodon-bd"/>
</dbReference>
<dbReference type="InterPro" id="IPR009008">
    <property type="entry name" value="Val/Leu/Ile-tRNA-synth_edit"/>
</dbReference>
<dbReference type="NCBIfam" id="TIGR00392">
    <property type="entry name" value="ileS"/>
    <property type="match status" value="1"/>
</dbReference>
<dbReference type="NCBIfam" id="TIGR03777">
    <property type="entry name" value="RPE4"/>
    <property type="match status" value="1"/>
</dbReference>
<dbReference type="PANTHER" id="PTHR42780:SF1">
    <property type="entry name" value="ISOLEUCINE--TRNA LIGASE, CYTOPLASMIC"/>
    <property type="match status" value="1"/>
</dbReference>
<dbReference type="PANTHER" id="PTHR42780">
    <property type="entry name" value="SOLEUCYL-TRNA SYNTHETASE"/>
    <property type="match status" value="1"/>
</dbReference>
<dbReference type="Pfam" id="PF08264">
    <property type="entry name" value="Anticodon_1"/>
    <property type="match status" value="1"/>
</dbReference>
<dbReference type="Pfam" id="PF19302">
    <property type="entry name" value="DUF5915"/>
    <property type="match status" value="1"/>
</dbReference>
<dbReference type="Pfam" id="PF00133">
    <property type="entry name" value="tRNA-synt_1"/>
    <property type="match status" value="1"/>
</dbReference>
<dbReference type="PRINTS" id="PR00984">
    <property type="entry name" value="TRNASYNTHILE"/>
</dbReference>
<dbReference type="SUPFAM" id="SSF47323">
    <property type="entry name" value="Anticodon-binding domain of a subclass of class I aminoacyl-tRNA synthetases"/>
    <property type="match status" value="1"/>
</dbReference>
<dbReference type="SUPFAM" id="SSF52374">
    <property type="entry name" value="Nucleotidylyl transferase"/>
    <property type="match status" value="1"/>
</dbReference>
<dbReference type="SUPFAM" id="SSF50677">
    <property type="entry name" value="ValRS/IleRS/LeuRS editing domain"/>
    <property type="match status" value="1"/>
</dbReference>
<dbReference type="PROSITE" id="PS00178">
    <property type="entry name" value="AA_TRNA_LIGASE_I"/>
    <property type="match status" value="1"/>
</dbReference>
<accession>Q1RIY1</accession>
<feature type="chain" id="PRO_0000273379" description="Isoleucine--tRNA ligase">
    <location>
        <begin position="1"/>
        <end position="1108"/>
    </location>
</feature>
<feature type="short sequence motif" description="'HIGH' region">
    <location>
        <begin position="53"/>
        <end position="63"/>
    </location>
</feature>
<feature type="short sequence motif" description="'KMSKS' region">
    <location>
        <begin position="654"/>
        <end position="658"/>
    </location>
</feature>
<feature type="binding site" evidence="1">
    <location>
        <position position="657"/>
    </location>
    <ligand>
        <name>ATP</name>
        <dbReference type="ChEBI" id="CHEBI:30616"/>
    </ligand>
</feature>
<sequence length="1108" mass="127566">MTNTKYYPEVSSNADFATIEKEILKFWQDNNIFQKSIDIREGDAEFIFYDGPPFANGLPHYGHLLTGFIKDVYARYQTVRGKKVERRFGWDCHGLPAEMQSEKELGISGHLAITNFGIEKFNAHCRDSVMKYAGEWEQYVTRQARWVDFKNSYKTMDKNFMESVLWAFKELYNKGLLYESMRVMPYSWACETPLSNFETRLDNSYRERADKAVTVSFVLCHPVSKSTLDVIPWLDHGIQKTINNDSANCSMDPVDKPRYDTENFLGITANYKEYRILAWTTTTWTLPSNLALAVGSDIDYALVPKGDVCYIIAASSVSKYAKELELKGDEQFTIIKGSELQGLSYKPLFDYFKNHPNSFKIFAGDFVVEGDGTGVVHMAPGFGEDDQILCESKGIKLVCPVDNSGKFTKEIPDLEGLQVFDANDKIIIKLKEQGNWLKTEQYIHNYPHCWRTDTPLIYKAVPSWYVKVTEFKDRMVELNQQINWIPTHVKDNLFGKWLENARDWSISRNRFWGTPLPVWKSDDPKYPRIDVYGSIEELEKDFGVKITDLHRPFIDELTRANPDDPTGKSTMRRIEDVFDCWFESGSMPYGQAHYPFENKQWFEEHFPADFIVEYSAQTRGWFYTLMVLSTALFDRPPFLNCICHGVILDATGQKLSKRLNNYADPLELFDKYGSDALRVTMLSSNVVKGQELLIDKDGKMVFDTLRLFIKPIWNAYHFFTMYVNADHIKGELNFTSENVLDVYILSKLKIAVEKIKESLDSFDTGTAYHAVSEFFEVLNNWYIRRSRARFWKSEKDADKQSAYNTLYTCLETMAIAMSSLVPLISEAIYLGLYCHPRKSGDPEKPECLDSRLCGNDNLSVHLCDYPDLSKFKINSELVDTMDTVLDICSHSLFIRSSENARVRQPLSSITIISKNNDKLKSFEDLIKDEINVKSVIYRDDLENYAVKKLSINFPLLGKRLPAKMKDIIAASKKNEWEVTSGSLIICNETLNSDEYKLILEPHSHIKGASSFAHNSSLLILDLELTPELIDEGIARDIVRFIQQARKNADFAITDRILIDINLPKITDIYGEFIKEQTLGEFAKDFIPDHISEIELDNHKLQLKIKKVN</sequence>
<proteinExistence type="inferred from homology"/>
<evidence type="ECO:0000255" key="1">
    <source>
        <dbReference type="HAMAP-Rule" id="MF_02003"/>
    </source>
</evidence>
<comment type="function">
    <text evidence="1">Catalyzes the attachment of isoleucine to tRNA(Ile). As IleRS can inadvertently accommodate and process structurally similar amino acids such as valine, to avoid such errors it has two additional distinct tRNA(Ile)-dependent editing activities. One activity is designated as 'pretransfer' editing and involves the hydrolysis of activated Val-AMP. The other activity is designated 'posttransfer' editing and involves deacylation of mischarged Val-tRNA(Ile).</text>
</comment>
<comment type="catalytic activity">
    <reaction evidence="1">
        <text>tRNA(Ile) + L-isoleucine + ATP = L-isoleucyl-tRNA(Ile) + AMP + diphosphate</text>
        <dbReference type="Rhea" id="RHEA:11060"/>
        <dbReference type="Rhea" id="RHEA-COMP:9666"/>
        <dbReference type="Rhea" id="RHEA-COMP:9695"/>
        <dbReference type="ChEBI" id="CHEBI:30616"/>
        <dbReference type="ChEBI" id="CHEBI:33019"/>
        <dbReference type="ChEBI" id="CHEBI:58045"/>
        <dbReference type="ChEBI" id="CHEBI:78442"/>
        <dbReference type="ChEBI" id="CHEBI:78528"/>
        <dbReference type="ChEBI" id="CHEBI:456215"/>
        <dbReference type="EC" id="6.1.1.5"/>
    </reaction>
</comment>
<comment type="cofactor">
    <cofactor evidence="1">
        <name>Zn(2+)</name>
        <dbReference type="ChEBI" id="CHEBI:29105"/>
    </cofactor>
</comment>
<comment type="subunit">
    <text evidence="1">Monomer.</text>
</comment>
<comment type="subcellular location">
    <subcellularLocation>
        <location evidence="1">Cytoplasm</location>
    </subcellularLocation>
</comment>
<comment type="domain">
    <text evidence="1">IleRS has two distinct active sites: one for aminoacylation and one for editing. The misactivated valine is translocated from the active site to the editing site, which sterically excludes the correctly activated isoleucine. The single editing site contains two valyl binding pockets, one specific for each substrate (Val-AMP or Val-tRNA(Ile)).</text>
</comment>
<comment type="similarity">
    <text evidence="1">Belongs to the class-I aminoacyl-tRNA synthetase family. IleS type 2 subfamily.</text>
</comment>
<gene>
    <name evidence="1" type="primary">ileS</name>
    <name type="ordered locus">RBE_0602</name>
</gene>
<name>SYI_RICBR</name>
<reference key="1">
    <citation type="journal article" date="2006" name="PLoS Genet.">
        <title>Genome sequence of Rickettsia bellii illuminates the role of amoebae in gene exchanges between intracellular pathogens.</title>
        <authorList>
            <person name="Ogata H."/>
            <person name="La Scola B."/>
            <person name="Audic S."/>
            <person name="Renesto P."/>
            <person name="Blanc G."/>
            <person name="Robert C."/>
            <person name="Fournier P.-E."/>
            <person name="Claverie J.-M."/>
            <person name="Raoult D."/>
        </authorList>
    </citation>
    <scope>NUCLEOTIDE SEQUENCE [LARGE SCALE GENOMIC DNA]</scope>
    <source>
        <strain>RML369-C</strain>
    </source>
</reference>